<sequence>MSEGVDLIDIYADEEFNQDSEFNNTDQIDLYDDVLTAASQPSDDRSSSTEPPPPVRQEPAPKPNNKTPAILYTYSGLRSRRAAVYVGSFSWWTTDQQLIQVIRSIGVYDVVELKFAENRANGQSKGYAEVVVASENSVHKLLELLPGKVLNGEKVDVRPATRQNLSQFEAQARKRIPPRAHSRDSSDSADGRATPSENLVPSSARVDKPPSVLPYFNRPPSALPLMGLPPPPIPPPPPLSSSFGVPPPPPGIHYQHLMPPPPRLPPHLAVPPPGAIPPALHLNPAFFPPPNATVGPPPDTYMKASTPYNHHGSRDSGPLPSTVSEAEFEEIMKRNRAISSSAISKAVSGASAGDYSDAIETLLTAIAVIKQSRVANDERCRVLISSLKDCLHGIEAKSYSVGASGSSSRKRHRSRERSPSRSRESSRRHRDLLHNEDRHDDYFQERNREHERHRDRERDRHH</sequence>
<protein>
    <recommendedName>
        <fullName evidence="5">Cleavage and polyadenylation specificity factor subunit 7</fullName>
    </recommendedName>
</protein>
<organism>
    <name type="scientific">Rattus norvegicus</name>
    <name type="common">Rat</name>
    <dbReference type="NCBI Taxonomy" id="10116"/>
    <lineage>
        <taxon>Eukaryota</taxon>
        <taxon>Metazoa</taxon>
        <taxon>Chordata</taxon>
        <taxon>Craniata</taxon>
        <taxon>Vertebrata</taxon>
        <taxon>Euteleostomi</taxon>
        <taxon>Mammalia</taxon>
        <taxon>Eutheria</taxon>
        <taxon>Euarchontoglires</taxon>
        <taxon>Glires</taxon>
        <taxon>Rodentia</taxon>
        <taxon>Myomorpha</taxon>
        <taxon>Muroidea</taxon>
        <taxon>Muridae</taxon>
        <taxon>Murinae</taxon>
        <taxon>Rattus</taxon>
    </lineage>
</organism>
<name>CPSF7_RAT</name>
<accession>Q5XI29</accession>
<reference key="1">
    <citation type="journal article" date="2004" name="Genome Res.">
        <title>The status, quality, and expansion of the NIH full-length cDNA project: the Mammalian Gene Collection (MGC).</title>
        <authorList>
            <consortium name="The MGC Project Team"/>
        </authorList>
    </citation>
    <scope>NUCLEOTIDE SEQUENCE [LARGE SCALE MRNA]</scope>
    <source>
        <tissue>Kidney</tissue>
    </source>
</reference>
<reference key="2">
    <citation type="journal article" date="2012" name="Nat. Commun.">
        <title>Quantitative maps of protein phosphorylation sites across 14 different rat organs and tissues.</title>
        <authorList>
            <person name="Lundby A."/>
            <person name="Secher A."/>
            <person name="Lage K."/>
            <person name="Nordsborg N.B."/>
            <person name="Dmytriyev A."/>
            <person name="Lundby C."/>
            <person name="Olsen J.V."/>
        </authorList>
    </citation>
    <scope>PHOSPHORYLATION [LARGE SCALE ANALYSIS] AT THR-194</scope>
    <scope>IDENTIFICATION BY MASS SPECTROMETRY [LARGE SCALE ANALYSIS]</scope>
</reference>
<comment type="function">
    <text evidence="2">Component of the cleavage factor Im (CFIm) complex that functions as an activator of the pre-mRNA 3'-end cleavage and polyadenylation processing required for the maturation of pre-mRNA into functional mRNAs. CFIm contributes to the recruitment of multiprotein complexes on specific sequences on the pre-mRNA 3'-end, so called cleavage and polyadenylation signals (pA signals). Most pre-mRNAs contain multiple pA signals, resulting in alternative cleavage and polyadenylation (APA) producing mRNAs with variable 3'-end formation. The CFIm complex acts as a key regulator of cleavage and polyadenylation site choice during APA through its binding to 5'-UGUA-3' elements localized in the 3'-untranslated region (UTR) for a huge number of pre-mRNAs. CPSF7 activates directly the mRNA 3'-processing machinery. Binds to pA signals in RNA substrates.</text>
</comment>
<comment type="subunit">
    <text evidence="2">Component of the cleavage factor Im (CFIm) complex which is a heterotetramer composed of two subunits of NUDT21/CPSF5 and two subunits of CPSF6 or CPSF7 or a heterodimer of CPSF6 and CPSF7. The cleavage factor Im (CFIm) complex associates with the CPSF and CSTF complexes to promote the assembly of the core mRNA 3'-processing machinery. Interacts with NUDT21/CPSF5. Interacts (via Arg/Ser-rich domain) with FIP1L1 (preferentially via unphosphorylated form and Arg/Glu/Asp-rich region); this interaction mediates, at least in part, the interaction between the CFIm and CPSF complexes and may be inhibited by CPSF7 hyper-phosphorylation.</text>
</comment>
<comment type="subcellular location">
    <subcellularLocation>
        <location evidence="2">Nucleus</location>
    </subcellularLocation>
    <subcellularLocation>
        <location evidence="2">Cytoplasm</location>
    </subcellularLocation>
    <text evidence="2">Shuttles between the nucleus and the cytoplasm in a transcription- and XPO1/CRM1-independent manner, most probably in complex with the cleavage factor Im complex (CFIm).</text>
</comment>
<comment type="domain">
    <text evidence="2">Contains an Arg/Ser-rich domain composed of arginine-serine dipeptide repeats within the C-terminal region that is necessary and sufficient for activating mRNA 3'-processing.</text>
</comment>
<comment type="PTM">
    <text evidence="2">Phosphorylated.</text>
</comment>
<comment type="PTM">
    <text evidence="2">Asymmetrically dimethylated on arginine residues by PRMT1.</text>
</comment>
<comment type="similarity">
    <text evidence="5">Belongs to the RRM CPSF6/7 family.</text>
</comment>
<feature type="chain" id="PRO_0000081529" description="Cleavage and polyadenylation specificity factor subunit 7">
    <location>
        <begin position="1"/>
        <end position="462"/>
    </location>
</feature>
<feature type="domain" description="RRM" evidence="3">
    <location>
        <begin position="82"/>
        <end position="162"/>
    </location>
</feature>
<feature type="region of interest" description="Disordered" evidence="4">
    <location>
        <begin position="34"/>
        <end position="68"/>
    </location>
</feature>
<feature type="region of interest" description="Disordered" evidence="4">
    <location>
        <begin position="161"/>
        <end position="213"/>
    </location>
</feature>
<feature type="region of interest" description="Disordered" evidence="4">
    <location>
        <begin position="400"/>
        <end position="462"/>
    </location>
</feature>
<feature type="region of interest" description="Arg/Ser-rich domain" evidence="2">
    <location>
        <begin position="409"/>
        <end position="460"/>
    </location>
</feature>
<feature type="compositionally biased region" description="Pro residues" evidence="4">
    <location>
        <begin position="50"/>
        <end position="62"/>
    </location>
</feature>
<feature type="compositionally biased region" description="Basic and acidic residues" evidence="4">
    <location>
        <begin position="181"/>
        <end position="190"/>
    </location>
</feature>
<feature type="compositionally biased region" description="Basic and acidic residues" evidence="4">
    <location>
        <begin position="416"/>
        <end position="425"/>
    </location>
</feature>
<feature type="compositionally biased region" description="Basic and acidic residues" evidence="4">
    <location>
        <begin position="432"/>
        <end position="462"/>
    </location>
</feature>
<feature type="modified residue" description="Phosphothreonine" evidence="7">
    <location>
        <position position="194"/>
    </location>
</feature>
<feature type="modified residue" description="Phosphoserine" evidence="1">
    <location>
        <position position="196"/>
    </location>
</feature>
<feature type="modified residue" description="Phosphoserine" evidence="2">
    <location>
        <position position="404"/>
    </location>
</feature>
<feature type="modified residue" description="Phosphoserine" evidence="2">
    <location>
        <position position="414"/>
    </location>
</feature>
<feature type="cross-link" description="Glycyl lysine isopeptide (Lys-Gly) (interchain with G-Cter in SUMO2)" evidence="2">
    <location>
        <position position="345"/>
    </location>
</feature>
<keyword id="KW-0963">Cytoplasm</keyword>
<keyword id="KW-1017">Isopeptide bond</keyword>
<keyword id="KW-0507">mRNA processing</keyword>
<keyword id="KW-0539">Nucleus</keyword>
<keyword id="KW-0597">Phosphoprotein</keyword>
<keyword id="KW-1185">Reference proteome</keyword>
<keyword id="KW-0694">RNA-binding</keyword>
<keyword id="KW-0832">Ubl conjugation</keyword>
<proteinExistence type="evidence at protein level"/>
<dbReference type="EMBL" id="BC083864">
    <property type="protein sequence ID" value="AAH83864.1"/>
    <property type="molecule type" value="mRNA"/>
</dbReference>
<dbReference type="RefSeq" id="NP_001014267.1">
    <property type="nucleotide sequence ID" value="NM_001014245.3"/>
</dbReference>
<dbReference type="RefSeq" id="XP_008758461.1">
    <property type="nucleotide sequence ID" value="XM_008760239.2"/>
</dbReference>
<dbReference type="SMR" id="Q5XI29"/>
<dbReference type="BioGRID" id="265348">
    <property type="interactions" value="1"/>
</dbReference>
<dbReference type="FunCoup" id="Q5XI29">
    <property type="interactions" value="4610"/>
</dbReference>
<dbReference type="IntAct" id="Q5XI29">
    <property type="interactions" value="1"/>
</dbReference>
<dbReference type="STRING" id="10116.ENSRNOP00000028074"/>
<dbReference type="iPTMnet" id="Q5XI29"/>
<dbReference type="PhosphoSitePlus" id="Q5XI29"/>
<dbReference type="jPOST" id="Q5XI29"/>
<dbReference type="PaxDb" id="10116-ENSRNOP00000028074"/>
<dbReference type="GeneID" id="365407"/>
<dbReference type="KEGG" id="rno:365407"/>
<dbReference type="UCSC" id="RGD:1305441">
    <property type="organism name" value="rat"/>
</dbReference>
<dbReference type="AGR" id="RGD:1305441"/>
<dbReference type="CTD" id="79869"/>
<dbReference type="RGD" id="1305441">
    <property type="gene designation" value="Cpsf7"/>
</dbReference>
<dbReference type="VEuPathDB" id="HostDB:ENSRNOG00000020668"/>
<dbReference type="eggNOG" id="KOG4849">
    <property type="taxonomic scope" value="Eukaryota"/>
</dbReference>
<dbReference type="HOGENOM" id="CLU_025289_1_1_1"/>
<dbReference type="InParanoid" id="Q5XI29"/>
<dbReference type="PhylomeDB" id="Q5XI29"/>
<dbReference type="Reactome" id="R-RNO-72187">
    <property type="pathway name" value="mRNA 3'-end processing"/>
</dbReference>
<dbReference type="Reactome" id="R-RNO-72203">
    <property type="pathway name" value="Processing of Capped Intron-Containing Pre-mRNA"/>
</dbReference>
<dbReference type="Reactome" id="R-RNO-73856">
    <property type="pathway name" value="RNA Polymerase II Transcription Termination"/>
</dbReference>
<dbReference type="Reactome" id="R-RNO-77595">
    <property type="pathway name" value="Processing of Intronless Pre-mRNAs"/>
</dbReference>
<dbReference type="Reactome" id="R-RNO-9013422">
    <property type="pathway name" value="RHOBTB1 GTPase cycle"/>
</dbReference>
<dbReference type="PRO" id="PR:Q5XI29"/>
<dbReference type="Proteomes" id="UP000002494">
    <property type="component" value="Chromosome 1"/>
</dbReference>
<dbReference type="Bgee" id="ENSRNOG00000020668">
    <property type="expression patterns" value="Expressed in thymus and 20 other cell types or tissues"/>
</dbReference>
<dbReference type="GO" id="GO:0005737">
    <property type="term" value="C:cytoplasm"/>
    <property type="evidence" value="ECO:0000250"/>
    <property type="project" value="UniProtKB"/>
</dbReference>
<dbReference type="GO" id="GO:0005847">
    <property type="term" value="C:mRNA cleavage and polyadenylation specificity factor complex"/>
    <property type="evidence" value="ECO:0000266"/>
    <property type="project" value="RGD"/>
</dbReference>
<dbReference type="GO" id="GO:0005849">
    <property type="term" value="C:mRNA cleavage factor complex"/>
    <property type="evidence" value="ECO:0000250"/>
    <property type="project" value="UniProtKB"/>
</dbReference>
<dbReference type="GO" id="GO:0005634">
    <property type="term" value="C:nucleus"/>
    <property type="evidence" value="ECO:0000250"/>
    <property type="project" value="UniProtKB"/>
</dbReference>
<dbReference type="GO" id="GO:0003729">
    <property type="term" value="F:mRNA binding"/>
    <property type="evidence" value="ECO:0000318"/>
    <property type="project" value="GO_Central"/>
</dbReference>
<dbReference type="GO" id="GO:0180010">
    <property type="term" value="P:co-transcriptional mRNA 3'-end processing, cleavage and polyadenylation pathway"/>
    <property type="evidence" value="ECO:0000250"/>
    <property type="project" value="UniProtKB"/>
</dbReference>
<dbReference type="GO" id="GO:0031124">
    <property type="term" value="P:mRNA 3'-end processing"/>
    <property type="evidence" value="ECO:0000266"/>
    <property type="project" value="RGD"/>
</dbReference>
<dbReference type="GO" id="GO:0110104">
    <property type="term" value="P:mRNA alternative polyadenylation"/>
    <property type="evidence" value="ECO:0000250"/>
    <property type="project" value="UniProtKB"/>
</dbReference>
<dbReference type="GO" id="GO:0051290">
    <property type="term" value="P:protein heterotetramerization"/>
    <property type="evidence" value="ECO:0000250"/>
    <property type="project" value="UniProtKB"/>
</dbReference>
<dbReference type="GO" id="GO:0051262">
    <property type="term" value="P:protein tetramerization"/>
    <property type="evidence" value="ECO:0000266"/>
    <property type="project" value="RGD"/>
</dbReference>
<dbReference type="CDD" id="cd12644">
    <property type="entry name" value="RRM_CFIm59"/>
    <property type="match status" value="1"/>
</dbReference>
<dbReference type="FunFam" id="3.30.70.330:FF:000231">
    <property type="entry name" value="Cleavage and polyadenylation specificity factor subunit 7"/>
    <property type="match status" value="1"/>
</dbReference>
<dbReference type="Gene3D" id="3.30.70.330">
    <property type="match status" value="1"/>
</dbReference>
<dbReference type="InterPro" id="IPR034772">
    <property type="entry name" value="CPSF6/7"/>
</dbReference>
<dbReference type="InterPro" id="IPR034773">
    <property type="entry name" value="CPSF7_RRM"/>
</dbReference>
<dbReference type="InterPro" id="IPR012677">
    <property type="entry name" value="Nucleotide-bd_a/b_plait_sf"/>
</dbReference>
<dbReference type="InterPro" id="IPR035979">
    <property type="entry name" value="RBD_domain_sf"/>
</dbReference>
<dbReference type="InterPro" id="IPR000504">
    <property type="entry name" value="RRM_dom"/>
</dbReference>
<dbReference type="PANTHER" id="PTHR23204">
    <property type="entry name" value="CLEAVAGE AND POLYADENYLATION SPECIFIC FACTOR"/>
    <property type="match status" value="1"/>
</dbReference>
<dbReference type="Pfam" id="PF00076">
    <property type="entry name" value="RRM_1"/>
    <property type="match status" value="1"/>
</dbReference>
<dbReference type="SMART" id="SM00360">
    <property type="entry name" value="RRM"/>
    <property type="match status" value="1"/>
</dbReference>
<dbReference type="SUPFAM" id="SSF54928">
    <property type="entry name" value="RNA-binding domain, RBD"/>
    <property type="match status" value="1"/>
</dbReference>
<dbReference type="PROSITE" id="PS50102">
    <property type="entry name" value="RRM"/>
    <property type="match status" value="1"/>
</dbReference>
<gene>
    <name evidence="6" type="primary">Cpsf7</name>
</gene>
<evidence type="ECO:0000250" key="1">
    <source>
        <dbReference type="UniProtKB" id="Q8BTV2"/>
    </source>
</evidence>
<evidence type="ECO:0000250" key="2">
    <source>
        <dbReference type="UniProtKB" id="Q8N684"/>
    </source>
</evidence>
<evidence type="ECO:0000255" key="3">
    <source>
        <dbReference type="PROSITE-ProRule" id="PRU00176"/>
    </source>
</evidence>
<evidence type="ECO:0000256" key="4">
    <source>
        <dbReference type="SAM" id="MobiDB-lite"/>
    </source>
</evidence>
<evidence type="ECO:0000305" key="5"/>
<evidence type="ECO:0000312" key="6">
    <source>
        <dbReference type="RGD" id="1305441"/>
    </source>
</evidence>
<evidence type="ECO:0007744" key="7">
    <source>
    </source>
</evidence>